<geneLocation type="mitochondrion"/>
<comment type="function">
    <text evidence="2">Component of the ubiquinol-cytochrome c reductase complex (complex III or cytochrome b-c1 complex) that is part of the mitochondrial respiratory chain. The b-c1 complex mediates electron transfer from ubiquinol to cytochrome c. Contributes to the generation of a proton gradient across the mitochondrial membrane that is then used for ATP synthesis.</text>
</comment>
<comment type="cofactor">
    <cofactor evidence="2">
        <name>heme b</name>
        <dbReference type="ChEBI" id="CHEBI:60344"/>
    </cofactor>
    <text evidence="2">Binds 2 heme b groups non-covalently.</text>
</comment>
<comment type="subunit">
    <text evidence="2">The cytochrome bc1 complex contains 11 subunits: 3 respiratory subunits (MT-CYB, CYC1 and UQCRFS1), 2 core proteins (UQCRC1 and UQCRC2) and 6 low-molecular weight proteins (UQCRH/QCR6, UQCRB/QCR7, UQCRQ/QCR8, UQCR10/QCR9, UQCR11/QCR10 and a cleavage product of UQCRFS1). This cytochrome bc1 complex then forms a dimer.</text>
</comment>
<comment type="subcellular location">
    <subcellularLocation>
        <location evidence="2">Mitochondrion inner membrane</location>
        <topology evidence="2">Multi-pass membrane protein</topology>
    </subcellularLocation>
</comment>
<comment type="miscellaneous">
    <text evidence="1">Heme 1 (or BL or b562) is low-potential and absorbs at about 562 nm, and heme 2 (or BH or b566) is high-potential and absorbs at about 566 nm.</text>
</comment>
<comment type="similarity">
    <text evidence="3 4">Belongs to the cytochrome b family.</text>
</comment>
<comment type="caution">
    <text evidence="2">The full-length protein contains only eight transmembrane helices, not nine as predicted by bioinformatics tools.</text>
</comment>
<proteinExistence type="inferred from homology"/>
<protein>
    <recommendedName>
        <fullName>Cytochrome b</fullName>
    </recommendedName>
    <alternativeName>
        <fullName>Complex III subunit 3</fullName>
    </alternativeName>
    <alternativeName>
        <fullName>Complex III subunit III</fullName>
    </alternativeName>
    <alternativeName>
        <fullName>Cytochrome b-c1 complex subunit 3</fullName>
    </alternativeName>
    <alternativeName>
        <fullName>Ubiquinol-cytochrome-c reductase complex cytochrome b subunit</fullName>
    </alternativeName>
</protein>
<accession>Q9T7Q0</accession>
<reference key="1">
    <citation type="journal article" date="1999" name="Cladistics">
        <title>Molecular phylogeny and biogeography of Madagascar's native rodents (Muridae: Nesomyinae): a test of the single origin hypothesis.</title>
        <authorList>
            <person name="Jansa S.A."/>
            <person name="Goodman S.M."/>
            <person name="Tucker P.K."/>
        </authorList>
    </citation>
    <scope>NUCLEOTIDE SEQUENCE [GENOMIC DNA]</scope>
    <source>
        <strain>Isolate Mbas595</strain>
    </source>
</reference>
<gene>
    <name type="primary">MT-CYB</name>
    <name type="synonym">COB</name>
    <name type="synonym">CYTB</name>
    <name type="synonym">MTCYB</name>
</gene>
<dbReference type="EMBL" id="AF160579">
    <property type="protein sequence ID" value="AAF15195.1"/>
    <property type="molecule type" value="Genomic_DNA"/>
</dbReference>
<dbReference type="SMR" id="Q9T7Q0"/>
<dbReference type="GO" id="GO:0005743">
    <property type="term" value="C:mitochondrial inner membrane"/>
    <property type="evidence" value="ECO:0007669"/>
    <property type="project" value="UniProtKB-SubCell"/>
</dbReference>
<dbReference type="GO" id="GO:0045275">
    <property type="term" value="C:respiratory chain complex III"/>
    <property type="evidence" value="ECO:0007669"/>
    <property type="project" value="InterPro"/>
</dbReference>
<dbReference type="GO" id="GO:0046872">
    <property type="term" value="F:metal ion binding"/>
    <property type="evidence" value="ECO:0007669"/>
    <property type="project" value="UniProtKB-KW"/>
</dbReference>
<dbReference type="GO" id="GO:0008121">
    <property type="term" value="F:ubiquinol-cytochrome-c reductase activity"/>
    <property type="evidence" value="ECO:0007669"/>
    <property type="project" value="InterPro"/>
</dbReference>
<dbReference type="GO" id="GO:0006122">
    <property type="term" value="P:mitochondrial electron transport, ubiquinol to cytochrome c"/>
    <property type="evidence" value="ECO:0007669"/>
    <property type="project" value="TreeGrafter"/>
</dbReference>
<dbReference type="CDD" id="cd00290">
    <property type="entry name" value="cytochrome_b_C"/>
    <property type="match status" value="1"/>
</dbReference>
<dbReference type="CDD" id="cd00284">
    <property type="entry name" value="Cytochrome_b_N"/>
    <property type="match status" value="1"/>
</dbReference>
<dbReference type="FunFam" id="1.20.810.10:FF:000002">
    <property type="entry name" value="Cytochrome b"/>
    <property type="match status" value="1"/>
</dbReference>
<dbReference type="Gene3D" id="1.20.810.10">
    <property type="entry name" value="Cytochrome Bc1 Complex, Chain C"/>
    <property type="match status" value="1"/>
</dbReference>
<dbReference type="InterPro" id="IPR005798">
    <property type="entry name" value="Cyt_b/b6_C"/>
</dbReference>
<dbReference type="InterPro" id="IPR036150">
    <property type="entry name" value="Cyt_b/b6_C_sf"/>
</dbReference>
<dbReference type="InterPro" id="IPR005797">
    <property type="entry name" value="Cyt_b/b6_N"/>
</dbReference>
<dbReference type="InterPro" id="IPR027387">
    <property type="entry name" value="Cytb/b6-like_sf"/>
</dbReference>
<dbReference type="InterPro" id="IPR030689">
    <property type="entry name" value="Cytochrome_b"/>
</dbReference>
<dbReference type="InterPro" id="IPR048260">
    <property type="entry name" value="Cytochrome_b_C_euk/bac"/>
</dbReference>
<dbReference type="InterPro" id="IPR048259">
    <property type="entry name" value="Cytochrome_b_N_euk/bac"/>
</dbReference>
<dbReference type="InterPro" id="IPR016174">
    <property type="entry name" value="Di-haem_cyt_TM"/>
</dbReference>
<dbReference type="PANTHER" id="PTHR19271">
    <property type="entry name" value="CYTOCHROME B"/>
    <property type="match status" value="1"/>
</dbReference>
<dbReference type="PANTHER" id="PTHR19271:SF16">
    <property type="entry name" value="CYTOCHROME B"/>
    <property type="match status" value="1"/>
</dbReference>
<dbReference type="Pfam" id="PF00032">
    <property type="entry name" value="Cytochrom_B_C"/>
    <property type="match status" value="1"/>
</dbReference>
<dbReference type="Pfam" id="PF00033">
    <property type="entry name" value="Cytochrome_B"/>
    <property type="match status" value="1"/>
</dbReference>
<dbReference type="PIRSF" id="PIRSF038885">
    <property type="entry name" value="COB"/>
    <property type="match status" value="1"/>
</dbReference>
<dbReference type="SUPFAM" id="SSF81648">
    <property type="entry name" value="a domain/subunit of cytochrome bc1 complex (Ubiquinol-cytochrome c reductase)"/>
    <property type="match status" value="1"/>
</dbReference>
<dbReference type="SUPFAM" id="SSF81342">
    <property type="entry name" value="Transmembrane di-heme cytochromes"/>
    <property type="match status" value="1"/>
</dbReference>
<dbReference type="PROSITE" id="PS51003">
    <property type="entry name" value="CYTB_CTER"/>
    <property type="match status" value="1"/>
</dbReference>
<dbReference type="PROSITE" id="PS51002">
    <property type="entry name" value="CYTB_NTER"/>
    <property type="match status" value="1"/>
</dbReference>
<feature type="chain" id="PRO_0000061141" description="Cytochrome b">
    <location>
        <begin position="1"/>
        <end position="380"/>
    </location>
</feature>
<feature type="transmembrane region" description="Helical" evidence="2">
    <location>
        <begin position="33"/>
        <end position="53"/>
    </location>
</feature>
<feature type="transmembrane region" description="Helical" evidence="2">
    <location>
        <begin position="77"/>
        <end position="98"/>
    </location>
</feature>
<feature type="transmembrane region" description="Helical" evidence="2">
    <location>
        <begin position="113"/>
        <end position="133"/>
    </location>
</feature>
<feature type="transmembrane region" description="Helical" evidence="2">
    <location>
        <begin position="178"/>
        <end position="198"/>
    </location>
</feature>
<feature type="transmembrane region" description="Helical" evidence="2">
    <location>
        <begin position="226"/>
        <end position="246"/>
    </location>
</feature>
<feature type="transmembrane region" description="Helical" evidence="2">
    <location>
        <begin position="288"/>
        <end position="308"/>
    </location>
</feature>
<feature type="transmembrane region" description="Helical" evidence="2">
    <location>
        <begin position="320"/>
        <end position="340"/>
    </location>
</feature>
<feature type="transmembrane region" description="Helical" evidence="2">
    <location>
        <begin position="347"/>
        <end position="367"/>
    </location>
</feature>
<feature type="binding site" description="axial binding residue" evidence="2">
    <location>
        <position position="83"/>
    </location>
    <ligand>
        <name>heme b</name>
        <dbReference type="ChEBI" id="CHEBI:60344"/>
        <label>b562</label>
    </ligand>
    <ligandPart>
        <name>Fe</name>
        <dbReference type="ChEBI" id="CHEBI:18248"/>
    </ligandPart>
</feature>
<feature type="binding site" description="axial binding residue" evidence="2">
    <location>
        <position position="97"/>
    </location>
    <ligand>
        <name>heme b</name>
        <dbReference type="ChEBI" id="CHEBI:60344"/>
        <label>b566</label>
    </ligand>
    <ligandPart>
        <name>Fe</name>
        <dbReference type="ChEBI" id="CHEBI:18248"/>
    </ligandPart>
</feature>
<feature type="binding site" description="axial binding residue" evidence="2">
    <location>
        <position position="182"/>
    </location>
    <ligand>
        <name>heme b</name>
        <dbReference type="ChEBI" id="CHEBI:60344"/>
        <label>b562</label>
    </ligand>
    <ligandPart>
        <name>Fe</name>
        <dbReference type="ChEBI" id="CHEBI:18248"/>
    </ligandPart>
</feature>
<feature type="binding site" description="axial binding residue" evidence="2">
    <location>
        <position position="196"/>
    </location>
    <ligand>
        <name>heme b</name>
        <dbReference type="ChEBI" id="CHEBI:60344"/>
        <label>b566</label>
    </ligand>
    <ligandPart>
        <name>Fe</name>
        <dbReference type="ChEBI" id="CHEBI:18248"/>
    </ligandPart>
</feature>
<feature type="binding site" evidence="2">
    <location>
        <position position="201"/>
    </location>
    <ligand>
        <name>a ubiquinone</name>
        <dbReference type="ChEBI" id="CHEBI:16389"/>
    </ligand>
</feature>
<sequence>MTNIRKSHPLFKIINHSFIDLPAPSNISSWWNFGSLLGVCLILQIITGLFLAMHYTADTTTAFSSVTHICRDVNYGWLIRYLHANGASMFFVCLFLHVGRGIYYGSYTFMETWNIGIILLFAVMATAFMGYVLPWGQMSFWGATVITNLLSAIPYIGTTLVEWIWGGFSVDKATLTRFFAFHFILPFIIAALAMVHLLFLHETGSNNPSGLNSDGDKIPFHPYYTIKDILGVLLLILILVSLVLFSPDLLGDPDNYTPANPLNTPPHIKPEWYFLFAYAILRSIPNKLGGVLALVLSILILALLPLLHTSKQRSLMFRPITQILFWILVADLFTLTWIGGQPVEYPFIIIGQLASILYFSIILIFMPISGIIEDKILKLY</sequence>
<keyword id="KW-0249">Electron transport</keyword>
<keyword id="KW-0349">Heme</keyword>
<keyword id="KW-0408">Iron</keyword>
<keyword id="KW-0472">Membrane</keyword>
<keyword id="KW-0479">Metal-binding</keyword>
<keyword id="KW-0496">Mitochondrion</keyword>
<keyword id="KW-0999">Mitochondrion inner membrane</keyword>
<keyword id="KW-0679">Respiratory chain</keyword>
<keyword id="KW-0812">Transmembrane</keyword>
<keyword id="KW-1133">Transmembrane helix</keyword>
<keyword id="KW-0813">Transport</keyword>
<keyword id="KW-0830">Ubiquinone</keyword>
<organism>
    <name type="scientific">Macrotarsomys bastardi</name>
    <name type="common">Bastard big-footed mouse</name>
    <dbReference type="NCBI Taxonomy" id="107266"/>
    <lineage>
        <taxon>Eukaryota</taxon>
        <taxon>Metazoa</taxon>
        <taxon>Chordata</taxon>
        <taxon>Craniata</taxon>
        <taxon>Vertebrata</taxon>
        <taxon>Euteleostomi</taxon>
        <taxon>Mammalia</taxon>
        <taxon>Eutheria</taxon>
        <taxon>Euarchontoglires</taxon>
        <taxon>Glires</taxon>
        <taxon>Rodentia</taxon>
        <taxon>Myomorpha</taxon>
        <taxon>Muroidea</taxon>
        <taxon>Nesomyidae</taxon>
        <taxon>Nesomyinae</taxon>
        <taxon>Macrotarsomys</taxon>
    </lineage>
</organism>
<name>CYB_MACBA</name>
<evidence type="ECO:0000250" key="1"/>
<evidence type="ECO:0000250" key="2">
    <source>
        <dbReference type="UniProtKB" id="P00157"/>
    </source>
</evidence>
<evidence type="ECO:0000255" key="3">
    <source>
        <dbReference type="PROSITE-ProRule" id="PRU00967"/>
    </source>
</evidence>
<evidence type="ECO:0000255" key="4">
    <source>
        <dbReference type="PROSITE-ProRule" id="PRU00968"/>
    </source>
</evidence>